<protein>
    <recommendedName>
        <fullName>Uncharacterized protein MJ1432</fullName>
    </recommendedName>
</protein>
<keyword id="KW-1185">Reference proteome</keyword>
<sequence length="162" mass="18365">MEIRKRYFLSKKDVKKIKKELEVFFENVDEIIPKKGNVEIAITDDFEIILVDKEPIAFKKDDKVIPTLKLLLKSLPDKNLVVVDIGAIKFLINGADVMAPGIVDADENIKEEDVVFVVDENHKKPICVGIALMNGKEMKEADKGKAIKNLHYVGDKIWNFKG</sequence>
<reference key="1">
    <citation type="journal article" date="1996" name="Science">
        <title>Complete genome sequence of the methanogenic archaeon, Methanococcus jannaschii.</title>
        <authorList>
            <person name="Bult C.J."/>
            <person name="White O."/>
            <person name="Olsen G.J."/>
            <person name="Zhou L."/>
            <person name="Fleischmann R.D."/>
            <person name="Sutton G.G."/>
            <person name="Blake J.A."/>
            <person name="FitzGerald L.M."/>
            <person name="Clayton R.A."/>
            <person name="Gocayne J.D."/>
            <person name="Kerlavage A.R."/>
            <person name="Dougherty B.A."/>
            <person name="Tomb J.-F."/>
            <person name="Adams M.D."/>
            <person name="Reich C.I."/>
            <person name="Overbeek R."/>
            <person name="Kirkness E.F."/>
            <person name="Weinstock K.G."/>
            <person name="Merrick J.M."/>
            <person name="Glodek A."/>
            <person name="Scott J.L."/>
            <person name="Geoghagen N.S.M."/>
            <person name="Weidman J.F."/>
            <person name="Fuhrmann J.L."/>
            <person name="Nguyen D."/>
            <person name="Utterback T.R."/>
            <person name="Kelley J.M."/>
            <person name="Peterson J.D."/>
            <person name="Sadow P.W."/>
            <person name="Hanna M.C."/>
            <person name="Cotton M.D."/>
            <person name="Roberts K.M."/>
            <person name="Hurst M.A."/>
            <person name="Kaine B.P."/>
            <person name="Borodovsky M."/>
            <person name="Klenk H.-P."/>
            <person name="Fraser C.M."/>
            <person name="Smith H.O."/>
            <person name="Woese C.R."/>
            <person name="Venter J.C."/>
        </authorList>
    </citation>
    <scope>NUCLEOTIDE SEQUENCE [LARGE SCALE GENOMIC DNA]</scope>
    <source>
        <strain>ATCC 43067 / DSM 2661 / JAL-1 / JCM 10045 / NBRC 100440</strain>
    </source>
</reference>
<feature type="chain" id="PRO_0000107324" description="Uncharacterized protein MJ1432">
    <location>
        <begin position="1"/>
        <end position="162"/>
    </location>
</feature>
<feature type="domain" description="PUA" evidence="1">
    <location>
        <begin position="78"/>
        <end position="154"/>
    </location>
</feature>
<dbReference type="EMBL" id="L77117">
    <property type="protein sequence ID" value="AAB99442.1"/>
    <property type="molecule type" value="Genomic_DNA"/>
</dbReference>
<dbReference type="PIR" id="G64478">
    <property type="entry name" value="G64478"/>
</dbReference>
<dbReference type="RefSeq" id="WP_010870950.1">
    <property type="nucleotide sequence ID" value="NC_000909.1"/>
</dbReference>
<dbReference type="SMR" id="Q58827"/>
<dbReference type="FunCoup" id="Q58827">
    <property type="interactions" value="111"/>
</dbReference>
<dbReference type="STRING" id="243232.MJ_1432"/>
<dbReference type="PaxDb" id="243232-MJ_1432"/>
<dbReference type="EnsemblBacteria" id="AAB99442">
    <property type="protein sequence ID" value="AAB99442"/>
    <property type="gene ID" value="MJ_1432"/>
</dbReference>
<dbReference type="GeneID" id="1452336"/>
<dbReference type="KEGG" id="mja:MJ_1432"/>
<dbReference type="eggNOG" id="arCOG00985">
    <property type="taxonomic scope" value="Archaea"/>
</dbReference>
<dbReference type="HOGENOM" id="CLU_090468_1_1_2"/>
<dbReference type="InParanoid" id="Q58827"/>
<dbReference type="OrthoDB" id="27972at2157"/>
<dbReference type="PhylomeDB" id="Q58827"/>
<dbReference type="Proteomes" id="UP000000805">
    <property type="component" value="Chromosome"/>
</dbReference>
<dbReference type="GO" id="GO:0003723">
    <property type="term" value="F:RNA binding"/>
    <property type="evidence" value="ECO:0007669"/>
    <property type="project" value="InterPro"/>
</dbReference>
<dbReference type="GO" id="GO:0001731">
    <property type="term" value="P:formation of translation preinitiation complex"/>
    <property type="evidence" value="ECO:0000318"/>
    <property type="project" value="GO_Central"/>
</dbReference>
<dbReference type="CDD" id="cd11580">
    <property type="entry name" value="eIF2D_N_like"/>
    <property type="match status" value="1"/>
</dbReference>
<dbReference type="CDD" id="cd21154">
    <property type="entry name" value="PUA_MJ1432-like"/>
    <property type="match status" value="1"/>
</dbReference>
<dbReference type="FunFam" id="3.10.400.20:FF:000011">
    <property type="entry name" value="PUA domain containing protein"/>
    <property type="match status" value="1"/>
</dbReference>
<dbReference type="Gene3D" id="3.10.400.20">
    <property type="match status" value="1"/>
</dbReference>
<dbReference type="InterPro" id="IPR022430">
    <property type="entry name" value="CHP03684"/>
</dbReference>
<dbReference type="InterPro" id="IPR015266">
    <property type="entry name" value="DUF1947"/>
</dbReference>
<dbReference type="InterPro" id="IPR016437">
    <property type="entry name" value="MCT-1/Tma20"/>
</dbReference>
<dbReference type="InterPro" id="IPR002478">
    <property type="entry name" value="PUA"/>
</dbReference>
<dbReference type="InterPro" id="IPR015947">
    <property type="entry name" value="PUA-like_sf"/>
</dbReference>
<dbReference type="InterPro" id="IPR004521">
    <property type="entry name" value="Uncharacterised_CHP00451"/>
</dbReference>
<dbReference type="NCBIfam" id="TIGR03684">
    <property type="entry name" value="arCOG00985"/>
    <property type="match status" value="1"/>
</dbReference>
<dbReference type="NCBIfam" id="NF011153">
    <property type="entry name" value="PRK14560.1-4"/>
    <property type="match status" value="1"/>
</dbReference>
<dbReference type="NCBIfam" id="TIGR00451">
    <property type="entry name" value="unchar_dom_2"/>
    <property type="match status" value="1"/>
</dbReference>
<dbReference type="PANTHER" id="PTHR22798:SF0">
    <property type="entry name" value="MALIGNANT T-CELL-AMPLIFIED SEQUENCE 1"/>
    <property type="match status" value="1"/>
</dbReference>
<dbReference type="PANTHER" id="PTHR22798">
    <property type="entry name" value="MCT-1 PROTEIN"/>
    <property type="match status" value="1"/>
</dbReference>
<dbReference type="Pfam" id="PF09183">
    <property type="entry name" value="DUF1947"/>
    <property type="match status" value="1"/>
</dbReference>
<dbReference type="Pfam" id="PF01472">
    <property type="entry name" value="PUA"/>
    <property type="match status" value="1"/>
</dbReference>
<dbReference type="PIRSF" id="PIRSF005067">
    <property type="entry name" value="Tma_RNA-bind_prd"/>
    <property type="match status" value="1"/>
</dbReference>
<dbReference type="SMART" id="SM00359">
    <property type="entry name" value="PUA"/>
    <property type="match status" value="1"/>
</dbReference>
<dbReference type="SUPFAM" id="SSF88697">
    <property type="entry name" value="PUA domain-like"/>
    <property type="match status" value="1"/>
</dbReference>
<dbReference type="PROSITE" id="PS50890">
    <property type="entry name" value="PUA"/>
    <property type="match status" value="1"/>
</dbReference>
<organism>
    <name type="scientific">Methanocaldococcus jannaschii (strain ATCC 43067 / DSM 2661 / JAL-1 / JCM 10045 / NBRC 100440)</name>
    <name type="common">Methanococcus jannaschii</name>
    <dbReference type="NCBI Taxonomy" id="243232"/>
    <lineage>
        <taxon>Archaea</taxon>
        <taxon>Methanobacteriati</taxon>
        <taxon>Methanobacteriota</taxon>
        <taxon>Methanomada group</taxon>
        <taxon>Methanococci</taxon>
        <taxon>Methanococcales</taxon>
        <taxon>Methanocaldococcaceae</taxon>
        <taxon>Methanocaldococcus</taxon>
    </lineage>
</organism>
<gene>
    <name type="ordered locus">MJ1432</name>
</gene>
<proteinExistence type="predicted"/>
<name>Y1432_METJA</name>
<evidence type="ECO:0000255" key="1">
    <source>
        <dbReference type="PROSITE-ProRule" id="PRU00161"/>
    </source>
</evidence>
<accession>Q58827</accession>